<comment type="function">
    <text evidence="7 8 9 10 12">Probable ligand-activated transcriptional activator. Acts as a transcriptional regulator in GABAergic motor neuron cell fate specification and development. Promotes cell-type-specific expression of guanylate cyclase genes that have key roles in aggregation behavior and hyperoxia avoidance. Has no role in carbon dioxide avoidance.</text>
</comment>
<comment type="subunit">
    <text evidence="11 12">Interacts with daf-21/hsp90. Interacts with aha-1.</text>
</comment>
<comment type="interaction">
    <interactant intactId="EBI-2409183">
        <id>O44712</id>
    </interactant>
    <interactant intactId="EBI-2408984">
        <id>O02219</id>
        <label>aha-1</label>
    </interactant>
    <organismsDiffer>false</organismsDiffer>
    <experiments>3</experiments>
</comment>
<comment type="subcellular location">
    <subcellularLocation>
        <location evidence="15">Nucleus</location>
    </subcellularLocation>
</comment>
<comment type="alternative products">
    <event type="alternative splicing"/>
    <isoform>
        <id>O44712-1</id>
        <name evidence="12">a</name>
        <sequence type="displayed"/>
    </isoform>
    <isoform>
        <id>O44712-2</id>
        <name evidence="13">b</name>
        <sequence type="described" ref="VSP_053164"/>
    </isoform>
</comment>
<comment type="tissue specificity">
    <text evidence="7 8 9">Expressed in many distinct neuronal cells including RMED, RMEV, RMEL and RMER. Functions in URX neurons to promote aggregation behavior.</text>
</comment>
<comment type="developmental stage">
    <text evidence="8">Expressed during embryonic and larval development.</text>
</comment>
<comment type="disruption phenotype">
    <text evidence="7 8 9">Defects in neuronal differentiation, axon branching, aberrant cell migration and abnormal aggregation behavior on lawns of bacterial food.</text>
</comment>
<reference evidence="15 16" key="1">
    <citation type="journal article" date="1998" name="Proc. Natl. Acad. Sci. U.S.A.">
        <title>Caenorhabditis elegans orthologs of the aryl hydrocarbon receptor and its heterodimerization partner the aryl hydrocarbon receptor nuclear translocator.</title>
        <authorList>
            <person name="Powell-Coffman J.A."/>
            <person name="Bradfield C.A."/>
            <person name="Wood W.B."/>
        </authorList>
    </citation>
    <scope>NUCLEOTIDE SEQUENCE [MRNA] (ISOFORM A)</scope>
    <scope>FUNCTION</scope>
    <scope>INTERACTION WITH DAF-21</scope>
</reference>
<reference evidence="17" key="2">
    <citation type="journal article" date="1998" name="Science">
        <title>Genome sequence of the nematode C. elegans: a platform for investigating biology.</title>
        <authorList>
            <consortium name="The C. elegans sequencing consortium"/>
        </authorList>
    </citation>
    <scope>NUCLEOTIDE SEQUENCE [LARGE SCALE GENOMIC DNA]</scope>
    <scope>ALTERNATIVE SPLICING</scope>
    <source>
        <strain evidence="17">Bristol N2</strain>
    </source>
</reference>
<reference evidence="15" key="3">
    <citation type="journal article" date="2004" name="Dev. Biol.">
        <title>The Caenorhabditis elegans aryl hydrocarbon receptor, AHR-1, regulates neuronal development.</title>
        <authorList>
            <person name="Qin H."/>
            <person name="Powell-Coffman J.A."/>
        </authorList>
    </citation>
    <scope>FUNCTION</scope>
    <scope>TISSUE SPECIFICITY</scope>
    <scope>DEVELOPMENTAL STAGE</scope>
    <scope>DISRUPTION PHENOTYPE</scope>
</reference>
<reference evidence="15" key="4">
    <citation type="journal article" date="2004" name="Development">
        <title>The AHR-1 aryl hydrocarbon receptor and its co-factor the AHA-1 aryl hydrocarbon receptor nuclear translocator specify GABAergic neuron cell fate in C. elegans.</title>
        <authorList>
            <person name="Huang X."/>
            <person name="Powell-Coffman J.A."/>
            <person name="Jin Y."/>
        </authorList>
    </citation>
    <scope>FUNCTION</scope>
    <scope>TISSUE SPECIFICITY</scope>
    <scope>DISRUPTION PHENOTYPE</scope>
</reference>
<reference evidence="15" key="5">
    <citation type="journal article" date="2006" name="Dev. Biol.">
        <title>The Caenorhabditis elegans AHR-1 transcription complex controls expression of soluble guanylate cyclase genes in the URX neurons and regulates aggregation behavior.</title>
        <authorList>
            <person name="Qin H."/>
            <person name="Zhai Z."/>
            <person name="Powell-Coffman J.A."/>
        </authorList>
    </citation>
    <scope>FUNCTION</scope>
    <scope>TISSUE SPECIFICITY</scope>
    <scope>DISRUPTION PHENOTYPE</scope>
</reference>
<reference evidence="15" key="6">
    <citation type="journal article" date="2008" name="Proc. Natl. Acad. Sci. U.S.A.">
        <title>Acute carbon dioxide avoidance in Caenorhabditis elegans.</title>
        <authorList>
            <person name="Hallem E.A."/>
            <person name="Sternberg P.W."/>
        </authorList>
    </citation>
    <scope>FUNCTION</scope>
</reference>
<reference evidence="15" key="7">
    <citation type="journal article" date="2009" name="Cell">
        <title>A multiparameter network reveals extensive divergence between C. elegans bHLH transcription factors.</title>
        <authorList>
            <person name="Grove C.A."/>
            <person name="De Masi F."/>
            <person name="Barrasa M.I."/>
            <person name="Newburger D.E."/>
            <person name="Alkema M.J."/>
            <person name="Bulyk M.L."/>
            <person name="Walhout A.J.M."/>
        </authorList>
    </citation>
    <scope>INTERACTION WITH AHA-1</scope>
</reference>
<accession>O44712</accession>
<accession>Q564W4</accession>
<accession>Q93369</accession>
<evidence type="ECO:0000250" key="1">
    <source>
        <dbReference type="UniProtKB" id="P30561"/>
    </source>
</evidence>
<evidence type="ECO:0000250" key="2">
    <source>
        <dbReference type="UniProtKB" id="P35869"/>
    </source>
</evidence>
<evidence type="ECO:0000255" key="3"/>
<evidence type="ECO:0000255" key="4">
    <source>
        <dbReference type="PROSITE-ProRule" id="PRU00140"/>
    </source>
</evidence>
<evidence type="ECO:0000255" key="5">
    <source>
        <dbReference type="PROSITE-ProRule" id="PRU00981"/>
    </source>
</evidence>
<evidence type="ECO:0000256" key="6">
    <source>
        <dbReference type="SAM" id="MobiDB-lite"/>
    </source>
</evidence>
<evidence type="ECO:0000269" key="7">
    <source>
    </source>
</evidence>
<evidence type="ECO:0000269" key="8">
    <source>
    </source>
</evidence>
<evidence type="ECO:0000269" key="9">
    <source>
    </source>
</evidence>
<evidence type="ECO:0000269" key="10">
    <source>
    </source>
</evidence>
<evidence type="ECO:0000269" key="11">
    <source>
    </source>
</evidence>
<evidence type="ECO:0000269" key="12">
    <source>
    </source>
</evidence>
<evidence type="ECO:0000269" key="13">
    <source>
    </source>
</evidence>
<evidence type="ECO:0000303" key="14">
    <source>
    </source>
</evidence>
<evidence type="ECO:0000305" key="15"/>
<evidence type="ECO:0000312" key="16">
    <source>
        <dbReference type="EMBL" id="AAC00000.1"/>
    </source>
</evidence>
<evidence type="ECO:0000312" key="17">
    <source>
        <dbReference type="EMBL" id="CAB51463.1"/>
    </source>
</evidence>
<evidence type="ECO:0000312" key="18">
    <source>
        <dbReference type="WormBase" id="C41G7.5a"/>
    </source>
</evidence>
<organism>
    <name type="scientific">Caenorhabditis elegans</name>
    <dbReference type="NCBI Taxonomy" id="6239"/>
    <lineage>
        <taxon>Eukaryota</taxon>
        <taxon>Metazoa</taxon>
        <taxon>Ecdysozoa</taxon>
        <taxon>Nematoda</taxon>
        <taxon>Chromadorea</taxon>
        <taxon>Rhabditida</taxon>
        <taxon>Rhabditina</taxon>
        <taxon>Rhabditomorpha</taxon>
        <taxon>Rhabditoidea</taxon>
        <taxon>Rhabditidae</taxon>
        <taxon>Peloderinae</taxon>
        <taxon>Caenorhabditis</taxon>
    </lineage>
</organism>
<feature type="propeptide" id="PRO_0000388706" evidence="1 3">
    <location>
        <begin position="1"/>
        <end position="2"/>
    </location>
</feature>
<feature type="chain" id="PRO_0000388707" description="Aryl hydrocarbon receptor protein 1" evidence="3">
    <location>
        <begin position="3"/>
        <end position="602"/>
    </location>
</feature>
<feature type="domain" description="bHLH" evidence="5">
    <location>
        <begin position="18"/>
        <end position="71"/>
    </location>
</feature>
<feature type="domain" description="PAS" evidence="4">
    <location>
        <begin position="126"/>
        <end position="196"/>
    </location>
</feature>
<feature type="region of interest" description="Disordered" evidence="6">
    <location>
        <begin position="1"/>
        <end position="28"/>
    </location>
</feature>
<feature type="region of interest" description="Required for maintaining the overall integrity of the AHR:ARNT heterodimer and its transcriptional activity" evidence="2">
    <location>
        <begin position="41"/>
        <end position="73"/>
    </location>
</feature>
<feature type="region of interest" description="Required for maintaining the overall integrity of the AHR:ARNT heterodimer and its transcriptional activity" evidence="2">
    <location>
        <begin position="133"/>
        <end position="141"/>
    </location>
</feature>
<feature type="region of interest" description="Required for maintaining the overall integrity of the AHR:ARNT heterodimer and its transcriptional activity" evidence="1">
    <location>
        <begin position="266"/>
        <end position="268"/>
    </location>
</feature>
<feature type="region of interest" description="Disordered" evidence="6">
    <location>
        <begin position="440"/>
        <end position="467"/>
    </location>
</feature>
<feature type="short sequence motif" description="Nuclear localization signal 1" evidence="2">
    <location>
        <begin position="5"/>
        <end position="8"/>
    </location>
</feature>
<feature type="short sequence motif" description="Nuclear localization signal 2" evidence="2">
    <location>
        <begin position="28"/>
        <end position="33"/>
    </location>
</feature>
<feature type="short sequence motif" description="Nuclear export signal" evidence="2">
    <location>
        <begin position="55"/>
        <end position="63"/>
    </location>
</feature>
<feature type="compositionally biased region" description="Basic residues" evidence="6">
    <location>
        <begin position="1"/>
        <end position="12"/>
    </location>
</feature>
<feature type="splice variant" id="VSP_053164" description="In isoform b." evidence="14">
    <location>
        <begin position="1"/>
        <end position="42"/>
    </location>
</feature>
<proteinExistence type="evidence at protein level"/>
<protein>
    <recommendedName>
        <fullName evidence="16">Aryl hydrocarbon receptor protein 1</fullName>
    </recommendedName>
</protein>
<keyword id="KW-0010">Activator</keyword>
<keyword id="KW-0025">Alternative splicing</keyword>
<keyword id="KW-0085">Behavior</keyword>
<keyword id="KW-0238">DNA-binding</keyword>
<keyword id="KW-0524">Neurogenesis</keyword>
<keyword id="KW-0539">Nucleus</keyword>
<keyword id="KW-0675">Receptor</keyword>
<keyword id="KW-1185">Reference proteome</keyword>
<keyword id="KW-0804">Transcription</keyword>
<keyword id="KW-0805">Transcription regulation</keyword>
<sequence length="602" mass="68232">MYASKRRQRNFKRVRDPPKQLTNTNPSKRHRERLNGELETVAMLLPYDSSTISRLDKLSVLRLAVSFLQCKAHFQACLHNSQFLSAGFPMSTHSYSYQPHPPIPFSNKVPTIFDLRIGTPMLDPEESNFEEISLKSLGGFILVLNDNGEIYYASENVENYLGFHQSDVLHQPVYDLIHSEDRDDIRQQLDSNFHIPTSSASNQFDVFAPQNSKYLERNVNARFRCLLDNTCGFLRIDMRGKLMSLHGLPSSYVMGRTASGPVLGMICVCTPFVPPSTSDLASEDMILKTKHQLDGALVSMDQKVYEMLEIDETDLPMPLYNLVHVEDAVCMAEAHKEAIKNGSSGLLVYRLVSTKTRRTYFVQSSCRMFYKNSKPESIGLTHRLLNEVEGTMLLEKRSTLKAKLLSFDDSFLQSPRNLQSTAALPLPSVLKDDQDCLEPSTSNSLFPSVPVPTPTTTKANRRRKENSHEIVPTIPSIPIPTHFDMQMFDPSWNHGVHPPAWPHDVYHLTQYPPTYPHPPGTVGYPDVQIAPVDYPGWHPNDIHMTQLPHGFTPDAQKLVPPHPQMSHFTEYPTPSTHHDLHHHPLKQDNFHLISEVTNLLGT</sequence>
<gene>
    <name evidence="16 18" type="primary">ahr-1</name>
    <name type="ORF">C41G7.5</name>
</gene>
<name>AHR_CAEEL</name>
<dbReference type="EMBL" id="AF039570">
    <property type="protein sequence ID" value="AAC00000.1"/>
    <property type="molecule type" value="mRNA"/>
</dbReference>
<dbReference type="EMBL" id="Z81048">
    <property type="protein sequence ID" value="CAB51463.1"/>
    <property type="molecule type" value="Genomic_DNA"/>
</dbReference>
<dbReference type="EMBL" id="Z81048">
    <property type="protein sequence ID" value="CAI79126.1"/>
    <property type="molecule type" value="Genomic_DNA"/>
</dbReference>
<dbReference type="PIR" id="T19898">
    <property type="entry name" value="T19898"/>
</dbReference>
<dbReference type="RefSeq" id="NP_001021036.1">
    <molecule id="O44712-1"/>
    <property type="nucleotide sequence ID" value="NM_001025865.4"/>
</dbReference>
<dbReference type="RefSeq" id="NP_001021037.1">
    <molecule id="O44712-2"/>
    <property type="nucleotide sequence ID" value="NM_001025866.5"/>
</dbReference>
<dbReference type="SMR" id="O44712"/>
<dbReference type="BioGRID" id="38214">
    <property type="interactions" value="1"/>
</dbReference>
<dbReference type="FunCoup" id="O44712">
    <property type="interactions" value="65"/>
</dbReference>
<dbReference type="IntAct" id="O44712">
    <property type="interactions" value="2"/>
</dbReference>
<dbReference type="STRING" id="6239.C41G7.5a.1"/>
<dbReference type="PaxDb" id="6239-C41G7.5a"/>
<dbReference type="EnsemblMetazoa" id="C41G7.5a.1">
    <molecule id="O44712-1"/>
    <property type="protein sequence ID" value="C41G7.5a.1"/>
    <property type="gene ID" value="WBGene00000096"/>
</dbReference>
<dbReference type="EnsemblMetazoa" id="C41G7.5b.1">
    <molecule id="O44712-2"/>
    <property type="protein sequence ID" value="C41G7.5b.1"/>
    <property type="gene ID" value="WBGene00000096"/>
</dbReference>
<dbReference type="GeneID" id="172788"/>
<dbReference type="KEGG" id="cel:CELE_C41G7.5"/>
<dbReference type="UCSC" id="C41G7.5a">
    <property type="organism name" value="c. elegans"/>
</dbReference>
<dbReference type="AGR" id="WB:WBGene00000096"/>
<dbReference type="CTD" id="172788"/>
<dbReference type="WormBase" id="C41G7.5a">
    <molecule id="O44712-1"/>
    <property type="protein sequence ID" value="CE20561"/>
    <property type="gene ID" value="WBGene00000096"/>
    <property type="gene designation" value="ahr-1"/>
</dbReference>
<dbReference type="WormBase" id="C41G7.5b">
    <molecule id="O44712-2"/>
    <property type="protein sequence ID" value="CE38293"/>
    <property type="gene ID" value="WBGene00000096"/>
    <property type="gene designation" value="ahr-1"/>
</dbReference>
<dbReference type="eggNOG" id="KOG3560">
    <property type="taxonomic scope" value="Eukaryota"/>
</dbReference>
<dbReference type="GeneTree" id="ENSGT00940000154486"/>
<dbReference type="InParanoid" id="O44712"/>
<dbReference type="OMA" id="FLQCKAH"/>
<dbReference type="OrthoDB" id="7788762at2759"/>
<dbReference type="PhylomeDB" id="O44712"/>
<dbReference type="PRO" id="PR:O44712"/>
<dbReference type="Proteomes" id="UP000001940">
    <property type="component" value="Chromosome I"/>
</dbReference>
<dbReference type="Bgee" id="WBGene00000096">
    <property type="expression patterns" value="Expressed in anatomical system and 4 other cell types or tissues"/>
</dbReference>
<dbReference type="GO" id="GO:0034751">
    <property type="term" value="C:aryl hydrocarbon receptor complex"/>
    <property type="evidence" value="ECO:0000318"/>
    <property type="project" value="GO_Central"/>
</dbReference>
<dbReference type="GO" id="GO:0034753">
    <property type="term" value="C:nuclear aryl hydrocarbon receptor complex"/>
    <property type="evidence" value="ECO:0000250"/>
    <property type="project" value="UniProtKB"/>
</dbReference>
<dbReference type="GO" id="GO:0005634">
    <property type="term" value="C:nucleus"/>
    <property type="evidence" value="ECO:0000250"/>
    <property type="project" value="UniProtKB"/>
</dbReference>
<dbReference type="GO" id="GO:0003677">
    <property type="term" value="F:DNA binding"/>
    <property type="evidence" value="ECO:0000314"/>
    <property type="project" value="WormBase"/>
</dbReference>
<dbReference type="GO" id="GO:0004879">
    <property type="term" value="F:nuclear receptor activity"/>
    <property type="evidence" value="ECO:0000318"/>
    <property type="project" value="GO_Central"/>
</dbReference>
<dbReference type="GO" id="GO:0046982">
    <property type="term" value="F:protein heterodimerization activity"/>
    <property type="evidence" value="ECO:0000250"/>
    <property type="project" value="UniProtKB"/>
</dbReference>
<dbReference type="GO" id="GO:0061629">
    <property type="term" value="F:RNA polymerase II-specific DNA-binding transcription factor binding"/>
    <property type="evidence" value="ECO:0000353"/>
    <property type="project" value="WormBase"/>
</dbReference>
<dbReference type="GO" id="GO:1990837">
    <property type="term" value="F:sequence-specific double-stranded DNA binding"/>
    <property type="evidence" value="ECO:0000250"/>
    <property type="project" value="UniProtKB"/>
</dbReference>
<dbReference type="GO" id="GO:0000976">
    <property type="term" value="F:transcription cis-regulatory region binding"/>
    <property type="evidence" value="ECO:0000318"/>
    <property type="project" value="GO_Central"/>
</dbReference>
<dbReference type="GO" id="GO:0030522">
    <property type="term" value="P:intracellular receptor signaling pathway"/>
    <property type="evidence" value="ECO:0000304"/>
    <property type="project" value="WormBase"/>
</dbReference>
<dbReference type="GO" id="GO:0040013">
    <property type="term" value="P:negative regulation of locomotion"/>
    <property type="evidence" value="ECO:0000315"/>
    <property type="project" value="WormBase"/>
</dbReference>
<dbReference type="GO" id="GO:0007399">
    <property type="term" value="P:nervous system development"/>
    <property type="evidence" value="ECO:0007669"/>
    <property type="project" value="UniProtKB-KW"/>
</dbReference>
<dbReference type="GO" id="GO:0045944">
    <property type="term" value="P:positive regulation of transcription by RNA polymerase II"/>
    <property type="evidence" value="ECO:0000250"/>
    <property type="project" value="UniProtKB"/>
</dbReference>
<dbReference type="GO" id="GO:0006357">
    <property type="term" value="P:regulation of transcription by RNA polymerase II"/>
    <property type="evidence" value="ECO:0000318"/>
    <property type="project" value="GO_Central"/>
</dbReference>
<dbReference type="GO" id="GO:0009410">
    <property type="term" value="P:response to xenobiotic stimulus"/>
    <property type="evidence" value="ECO:0000314"/>
    <property type="project" value="WormBase"/>
</dbReference>
<dbReference type="GO" id="GO:0006805">
    <property type="term" value="P:xenobiotic metabolic process"/>
    <property type="evidence" value="ECO:0007669"/>
    <property type="project" value="InterPro"/>
</dbReference>
<dbReference type="CDD" id="cd19696">
    <property type="entry name" value="bHLH-PAS_AhR_like"/>
    <property type="match status" value="1"/>
</dbReference>
<dbReference type="CDD" id="cd00130">
    <property type="entry name" value="PAS"/>
    <property type="match status" value="1"/>
</dbReference>
<dbReference type="Gene3D" id="4.10.280.10">
    <property type="entry name" value="Helix-loop-helix DNA-binding domain"/>
    <property type="match status" value="1"/>
</dbReference>
<dbReference type="Gene3D" id="3.30.450.20">
    <property type="entry name" value="PAS domain"/>
    <property type="match status" value="2"/>
</dbReference>
<dbReference type="InterPro" id="IPR039091">
    <property type="entry name" value="AHR/AHRR"/>
</dbReference>
<dbReference type="InterPro" id="IPR011598">
    <property type="entry name" value="bHLH_dom"/>
</dbReference>
<dbReference type="InterPro" id="IPR036638">
    <property type="entry name" value="HLH_DNA-bd_sf"/>
</dbReference>
<dbReference type="InterPro" id="IPR000014">
    <property type="entry name" value="PAS"/>
</dbReference>
<dbReference type="InterPro" id="IPR035965">
    <property type="entry name" value="PAS-like_dom_sf"/>
</dbReference>
<dbReference type="InterPro" id="IPR013767">
    <property type="entry name" value="PAS_fold"/>
</dbReference>
<dbReference type="InterPro" id="IPR013655">
    <property type="entry name" value="PAS_fold_3"/>
</dbReference>
<dbReference type="PANTHER" id="PTHR10649">
    <property type="entry name" value="ARYL HYDROCARBON RECEPTOR"/>
    <property type="match status" value="1"/>
</dbReference>
<dbReference type="PANTHER" id="PTHR10649:SF12">
    <property type="entry name" value="SPINELESS, ISOFORM C"/>
    <property type="match status" value="1"/>
</dbReference>
<dbReference type="Pfam" id="PF00989">
    <property type="entry name" value="PAS"/>
    <property type="match status" value="1"/>
</dbReference>
<dbReference type="Pfam" id="PF08447">
    <property type="entry name" value="PAS_3"/>
    <property type="match status" value="1"/>
</dbReference>
<dbReference type="SMART" id="SM00091">
    <property type="entry name" value="PAS"/>
    <property type="match status" value="1"/>
</dbReference>
<dbReference type="SUPFAM" id="SSF55785">
    <property type="entry name" value="PYP-like sensor domain (PAS domain)"/>
    <property type="match status" value="2"/>
</dbReference>
<dbReference type="PROSITE" id="PS50888">
    <property type="entry name" value="BHLH"/>
    <property type="match status" value="1"/>
</dbReference>
<dbReference type="PROSITE" id="PS50112">
    <property type="entry name" value="PAS"/>
    <property type="match status" value="1"/>
</dbReference>